<name>LPXC_SHESH</name>
<organism>
    <name type="scientific">Shewanella sediminis (strain HAW-EB3)</name>
    <dbReference type="NCBI Taxonomy" id="425104"/>
    <lineage>
        <taxon>Bacteria</taxon>
        <taxon>Pseudomonadati</taxon>
        <taxon>Pseudomonadota</taxon>
        <taxon>Gammaproteobacteria</taxon>
        <taxon>Alteromonadales</taxon>
        <taxon>Shewanellaceae</taxon>
        <taxon>Shewanella</taxon>
    </lineage>
</organism>
<protein>
    <recommendedName>
        <fullName evidence="1">UDP-3-O-acyl-N-acetylglucosamine deacetylase</fullName>
        <shortName evidence="1">UDP-3-O-acyl-GlcNAc deacetylase</shortName>
        <ecNumber evidence="1">3.5.1.108</ecNumber>
    </recommendedName>
    <alternativeName>
        <fullName evidence="1">UDP-3-O-[R-3-hydroxymyristoyl]-N-acetylglucosamine deacetylase</fullName>
    </alternativeName>
</protein>
<dbReference type="EC" id="3.5.1.108" evidence="1"/>
<dbReference type="EMBL" id="CP000821">
    <property type="protein sequence ID" value="ABV35028.1"/>
    <property type="molecule type" value="Genomic_DNA"/>
</dbReference>
<dbReference type="RefSeq" id="WP_012140765.1">
    <property type="nucleotide sequence ID" value="NC_009831.1"/>
</dbReference>
<dbReference type="SMR" id="A8FQA5"/>
<dbReference type="STRING" id="425104.Ssed_0415"/>
<dbReference type="KEGG" id="sse:Ssed_0415"/>
<dbReference type="eggNOG" id="COG0774">
    <property type="taxonomic scope" value="Bacteria"/>
</dbReference>
<dbReference type="HOGENOM" id="CLU_046528_1_0_6"/>
<dbReference type="OrthoDB" id="9802746at2"/>
<dbReference type="UniPathway" id="UPA00359">
    <property type="reaction ID" value="UER00478"/>
</dbReference>
<dbReference type="Proteomes" id="UP000002015">
    <property type="component" value="Chromosome"/>
</dbReference>
<dbReference type="GO" id="GO:0016020">
    <property type="term" value="C:membrane"/>
    <property type="evidence" value="ECO:0007669"/>
    <property type="project" value="GOC"/>
</dbReference>
<dbReference type="GO" id="GO:0046872">
    <property type="term" value="F:metal ion binding"/>
    <property type="evidence" value="ECO:0007669"/>
    <property type="project" value="UniProtKB-KW"/>
</dbReference>
<dbReference type="GO" id="GO:0103117">
    <property type="term" value="F:UDP-3-O-acyl-N-acetylglucosamine deacetylase activity"/>
    <property type="evidence" value="ECO:0007669"/>
    <property type="project" value="UniProtKB-UniRule"/>
</dbReference>
<dbReference type="GO" id="GO:0009245">
    <property type="term" value="P:lipid A biosynthetic process"/>
    <property type="evidence" value="ECO:0007669"/>
    <property type="project" value="UniProtKB-UniRule"/>
</dbReference>
<dbReference type="Gene3D" id="3.30.230.20">
    <property type="entry name" value="lpxc deacetylase, domain 1"/>
    <property type="match status" value="1"/>
</dbReference>
<dbReference type="Gene3D" id="3.30.1700.10">
    <property type="entry name" value="lpxc deacetylase, domain 2"/>
    <property type="match status" value="1"/>
</dbReference>
<dbReference type="HAMAP" id="MF_00388">
    <property type="entry name" value="LpxC"/>
    <property type="match status" value="1"/>
</dbReference>
<dbReference type="InterPro" id="IPR020568">
    <property type="entry name" value="Ribosomal_Su5_D2-typ_SF"/>
</dbReference>
<dbReference type="InterPro" id="IPR004463">
    <property type="entry name" value="UDP-acyl_GlcNac_deAcase"/>
</dbReference>
<dbReference type="InterPro" id="IPR011334">
    <property type="entry name" value="UDP-acyl_GlcNac_deAcase_C"/>
</dbReference>
<dbReference type="InterPro" id="IPR015870">
    <property type="entry name" value="UDP-acyl_N-AcGlcN_deAcase_N"/>
</dbReference>
<dbReference type="NCBIfam" id="TIGR00325">
    <property type="entry name" value="lpxC"/>
    <property type="match status" value="1"/>
</dbReference>
<dbReference type="PANTHER" id="PTHR33694">
    <property type="entry name" value="UDP-3-O-ACYL-N-ACETYLGLUCOSAMINE DEACETYLASE 1, MITOCHONDRIAL-RELATED"/>
    <property type="match status" value="1"/>
</dbReference>
<dbReference type="PANTHER" id="PTHR33694:SF1">
    <property type="entry name" value="UDP-3-O-ACYL-N-ACETYLGLUCOSAMINE DEACETYLASE 1, MITOCHONDRIAL-RELATED"/>
    <property type="match status" value="1"/>
</dbReference>
<dbReference type="Pfam" id="PF03331">
    <property type="entry name" value="LpxC"/>
    <property type="match status" value="1"/>
</dbReference>
<dbReference type="SUPFAM" id="SSF54211">
    <property type="entry name" value="Ribosomal protein S5 domain 2-like"/>
    <property type="match status" value="2"/>
</dbReference>
<comment type="function">
    <text evidence="1">Catalyzes the hydrolysis of UDP-3-O-myristoyl-N-acetylglucosamine to form UDP-3-O-myristoylglucosamine and acetate, the committed step in lipid A biosynthesis.</text>
</comment>
<comment type="catalytic activity">
    <reaction evidence="1">
        <text>a UDP-3-O-[(3R)-3-hydroxyacyl]-N-acetyl-alpha-D-glucosamine + H2O = a UDP-3-O-[(3R)-3-hydroxyacyl]-alpha-D-glucosamine + acetate</text>
        <dbReference type="Rhea" id="RHEA:67816"/>
        <dbReference type="ChEBI" id="CHEBI:15377"/>
        <dbReference type="ChEBI" id="CHEBI:30089"/>
        <dbReference type="ChEBI" id="CHEBI:137740"/>
        <dbReference type="ChEBI" id="CHEBI:173225"/>
        <dbReference type="EC" id="3.5.1.108"/>
    </reaction>
</comment>
<comment type="cofactor">
    <cofactor evidence="1">
        <name>Zn(2+)</name>
        <dbReference type="ChEBI" id="CHEBI:29105"/>
    </cofactor>
</comment>
<comment type="pathway">
    <text evidence="1">Glycolipid biosynthesis; lipid IV(A) biosynthesis; lipid IV(A) from (3R)-3-hydroxytetradecanoyl-[acyl-carrier-protein] and UDP-N-acetyl-alpha-D-glucosamine: step 2/6.</text>
</comment>
<comment type="similarity">
    <text evidence="1">Belongs to the LpxC family.</text>
</comment>
<gene>
    <name evidence="1" type="primary">lpxC</name>
    <name type="ordered locus">Ssed_0415</name>
</gene>
<sequence length="306" mass="33740">MIFQRTVKEMVKTTGVGLHSGNKVTLSIKPAPVNTGIVLVRTDLEPAVAIPAKADLVRETTMCTALVNDEGVRISTIEHLFAALAGLGIDNAVIEVDAPEIPIMDGSASPWVFLLQSVGIQEQASAKKYLRIKNTVRVEDGDKWAELKPFKGFRVDFAIDFNHPEIARSQQHMVMDFSTSAFVRDISRARTFGFMRDIEYLRANNLALGGSMENAVVLDEYRVLNPDGLRYEDEFVKHKILDAFGDLYVAGYAIVGEFCAFKTGHALNNQLVRALLAQQDAWELVSFEKDEAPVSFSVPTGAAVFT</sequence>
<proteinExistence type="inferred from homology"/>
<reference key="1">
    <citation type="submission" date="2007-08" db="EMBL/GenBank/DDBJ databases">
        <title>Complete sequence of Shewanella sediminis HAW-EB3.</title>
        <authorList>
            <consortium name="US DOE Joint Genome Institute"/>
            <person name="Copeland A."/>
            <person name="Lucas S."/>
            <person name="Lapidus A."/>
            <person name="Barry K."/>
            <person name="Glavina del Rio T."/>
            <person name="Dalin E."/>
            <person name="Tice H."/>
            <person name="Pitluck S."/>
            <person name="Chertkov O."/>
            <person name="Brettin T."/>
            <person name="Bruce D."/>
            <person name="Detter J.C."/>
            <person name="Han C."/>
            <person name="Schmutz J."/>
            <person name="Larimer F."/>
            <person name="Land M."/>
            <person name="Hauser L."/>
            <person name="Kyrpides N."/>
            <person name="Kim E."/>
            <person name="Zhao J.-S."/>
            <person name="Richardson P."/>
        </authorList>
    </citation>
    <scope>NUCLEOTIDE SEQUENCE [LARGE SCALE GENOMIC DNA]</scope>
    <source>
        <strain>HAW-EB3</strain>
    </source>
</reference>
<evidence type="ECO:0000255" key="1">
    <source>
        <dbReference type="HAMAP-Rule" id="MF_00388"/>
    </source>
</evidence>
<accession>A8FQA5</accession>
<feature type="chain" id="PRO_1000080230" description="UDP-3-O-acyl-N-acetylglucosamine deacetylase">
    <location>
        <begin position="1"/>
        <end position="306"/>
    </location>
</feature>
<feature type="active site" description="Proton donor" evidence="1">
    <location>
        <position position="265"/>
    </location>
</feature>
<feature type="binding site" evidence="1">
    <location>
        <position position="79"/>
    </location>
    <ligand>
        <name>Zn(2+)</name>
        <dbReference type="ChEBI" id="CHEBI:29105"/>
    </ligand>
</feature>
<feature type="binding site" evidence="1">
    <location>
        <position position="238"/>
    </location>
    <ligand>
        <name>Zn(2+)</name>
        <dbReference type="ChEBI" id="CHEBI:29105"/>
    </ligand>
</feature>
<feature type="binding site" evidence="1">
    <location>
        <position position="242"/>
    </location>
    <ligand>
        <name>Zn(2+)</name>
        <dbReference type="ChEBI" id="CHEBI:29105"/>
    </ligand>
</feature>
<keyword id="KW-0378">Hydrolase</keyword>
<keyword id="KW-0441">Lipid A biosynthesis</keyword>
<keyword id="KW-0444">Lipid biosynthesis</keyword>
<keyword id="KW-0443">Lipid metabolism</keyword>
<keyword id="KW-0479">Metal-binding</keyword>
<keyword id="KW-1185">Reference proteome</keyword>
<keyword id="KW-0862">Zinc</keyword>